<proteinExistence type="evidence at transcript level"/>
<accession>Q9P7D9</accession>
<accession>O13342</accession>
<feature type="chain" id="PRO_0000046884" description="Zinc finger protein rsv1">
    <location>
        <begin position="1"/>
        <end position="428"/>
    </location>
</feature>
<feature type="zinc finger region" description="C2H2-type 1" evidence="2">
    <location>
        <begin position="4"/>
        <end position="26"/>
    </location>
</feature>
<feature type="zinc finger region" description="C2H2-type 2" evidence="2">
    <location>
        <begin position="32"/>
        <end position="56"/>
    </location>
</feature>
<feature type="region of interest" description="Disordered" evidence="3">
    <location>
        <begin position="67"/>
        <end position="103"/>
    </location>
</feature>
<feature type="region of interest" description="Disordered" evidence="3">
    <location>
        <begin position="133"/>
        <end position="190"/>
    </location>
</feature>
<feature type="compositionally biased region" description="Basic and acidic residues" evidence="3">
    <location>
        <begin position="71"/>
        <end position="92"/>
    </location>
</feature>
<feature type="compositionally biased region" description="Polar residues" evidence="3">
    <location>
        <begin position="145"/>
        <end position="154"/>
    </location>
</feature>
<feature type="compositionally biased region" description="Low complexity" evidence="3">
    <location>
        <begin position="166"/>
        <end position="186"/>
    </location>
</feature>
<feature type="sequence conflict" description="In Ref. 1; AAB87047." evidence="4" ref="1">
    <original>K</original>
    <variation>T</variation>
    <location>
        <position position="74"/>
    </location>
</feature>
<feature type="sequence conflict" description="In Ref. 1; AAB87047." evidence="4" ref="1">
    <original>C</original>
    <variation>W</variation>
    <location>
        <position position="354"/>
    </location>
</feature>
<feature type="sequence conflict" description="In Ref. 1; AAB87047." evidence="4" ref="1">
    <original>H</original>
    <variation>D</variation>
    <location>
        <position position="416"/>
    </location>
</feature>
<keyword id="KW-0238">DNA-binding</keyword>
<keyword id="KW-0479">Metal-binding</keyword>
<keyword id="KW-0539">Nucleus</keyword>
<keyword id="KW-1185">Reference proteome</keyword>
<keyword id="KW-0677">Repeat</keyword>
<keyword id="KW-0804">Transcription</keyword>
<keyword id="KW-0805">Transcription regulation</keyword>
<keyword id="KW-0862">Zinc</keyword>
<keyword id="KW-0863">Zinc-finger</keyword>
<name>RSV1_SCHPO</name>
<evidence type="ECO:0000250" key="1"/>
<evidence type="ECO:0000255" key="2">
    <source>
        <dbReference type="PROSITE-ProRule" id="PRU00042"/>
    </source>
</evidence>
<evidence type="ECO:0000256" key="3">
    <source>
        <dbReference type="SAM" id="MobiDB-lite"/>
    </source>
</evidence>
<evidence type="ECO:0000305" key="4"/>
<reference key="1">
    <citation type="journal article" date="1997" name="J. Cell Sci.">
        <title>A zinc finger protein required for stationary phase viability in fission yeast.</title>
        <authorList>
            <person name="Hao Z."/>
            <person name="Furunobu A."/>
            <person name="Nagata A."/>
            <person name="Okayama H."/>
        </authorList>
    </citation>
    <scope>NUCLEOTIDE SEQUENCE [GENOMIC DNA]</scope>
    <source>
        <strain>972 / ATCC 24843</strain>
    </source>
</reference>
<reference key="2">
    <citation type="journal article" date="2002" name="Nature">
        <title>The genome sequence of Schizosaccharomyces pombe.</title>
        <authorList>
            <person name="Wood V."/>
            <person name="Gwilliam R."/>
            <person name="Rajandream M.A."/>
            <person name="Lyne M.H."/>
            <person name="Lyne R."/>
            <person name="Stewart A."/>
            <person name="Sgouros J.G."/>
            <person name="Peat N."/>
            <person name="Hayles J."/>
            <person name="Baker S.G."/>
            <person name="Basham D."/>
            <person name="Bowman S."/>
            <person name="Brooks K."/>
            <person name="Brown D."/>
            <person name="Brown S."/>
            <person name="Chillingworth T."/>
            <person name="Churcher C.M."/>
            <person name="Collins M."/>
            <person name="Connor R."/>
            <person name="Cronin A."/>
            <person name="Davis P."/>
            <person name="Feltwell T."/>
            <person name="Fraser A."/>
            <person name="Gentles S."/>
            <person name="Goble A."/>
            <person name="Hamlin N."/>
            <person name="Harris D.E."/>
            <person name="Hidalgo J."/>
            <person name="Hodgson G."/>
            <person name="Holroyd S."/>
            <person name="Hornsby T."/>
            <person name="Howarth S."/>
            <person name="Huckle E.J."/>
            <person name="Hunt S."/>
            <person name="Jagels K."/>
            <person name="James K.D."/>
            <person name="Jones L."/>
            <person name="Jones M."/>
            <person name="Leather S."/>
            <person name="McDonald S."/>
            <person name="McLean J."/>
            <person name="Mooney P."/>
            <person name="Moule S."/>
            <person name="Mungall K.L."/>
            <person name="Murphy L.D."/>
            <person name="Niblett D."/>
            <person name="Odell C."/>
            <person name="Oliver K."/>
            <person name="O'Neil S."/>
            <person name="Pearson D."/>
            <person name="Quail M.A."/>
            <person name="Rabbinowitsch E."/>
            <person name="Rutherford K.M."/>
            <person name="Rutter S."/>
            <person name="Saunders D."/>
            <person name="Seeger K."/>
            <person name="Sharp S."/>
            <person name="Skelton J."/>
            <person name="Simmonds M.N."/>
            <person name="Squares R."/>
            <person name="Squares S."/>
            <person name="Stevens K."/>
            <person name="Taylor K."/>
            <person name="Taylor R.G."/>
            <person name="Tivey A."/>
            <person name="Walsh S.V."/>
            <person name="Warren T."/>
            <person name="Whitehead S."/>
            <person name="Woodward J.R."/>
            <person name="Volckaert G."/>
            <person name="Aert R."/>
            <person name="Robben J."/>
            <person name="Grymonprez B."/>
            <person name="Weltjens I."/>
            <person name="Vanstreels E."/>
            <person name="Rieger M."/>
            <person name="Schaefer M."/>
            <person name="Mueller-Auer S."/>
            <person name="Gabel C."/>
            <person name="Fuchs M."/>
            <person name="Duesterhoeft A."/>
            <person name="Fritzc C."/>
            <person name="Holzer E."/>
            <person name="Moestl D."/>
            <person name="Hilbert H."/>
            <person name="Borzym K."/>
            <person name="Langer I."/>
            <person name="Beck A."/>
            <person name="Lehrach H."/>
            <person name="Reinhardt R."/>
            <person name="Pohl T.M."/>
            <person name="Eger P."/>
            <person name="Zimmermann W."/>
            <person name="Wedler H."/>
            <person name="Wambutt R."/>
            <person name="Purnelle B."/>
            <person name="Goffeau A."/>
            <person name="Cadieu E."/>
            <person name="Dreano S."/>
            <person name="Gloux S."/>
            <person name="Lelaure V."/>
            <person name="Mottier S."/>
            <person name="Galibert F."/>
            <person name="Aves S.J."/>
            <person name="Xiang Z."/>
            <person name="Hunt C."/>
            <person name="Moore K."/>
            <person name="Hurst S.M."/>
            <person name="Lucas M."/>
            <person name="Rochet M."/>
            <person name="Gaillardin C."/>
            <person name="Tallada V.A."/>
            <person name="Garzon A."/>
            <person name="Thode G."/>
            <person name="Daga R.R."/>
            <person name="Cruzado L."/>
            <person name="Jimenez J."/>
            <person name="Sanchez M."/>
            <person name="del Rey F."/>
            <person name="Benito J."/>
            <person name="Dominguez A."/>
            <person name="Revuelta J.L."/>
            <person name="Moreno S."/>
            <person name="Armstrong J."/>
            <person name="Forsburg S.L."/>
            <person name="Cerutti L."/>
            <person name="Lowe T."/>
            <person name="McCombie W.R."/>
            <person name="Paulsen I."/>
            <person name="Potashkin J."/>
            <person name="Shpakovski G.V."/>
            <person name="Ussery D."/>
            <person name="Barrell B.G."/>
            <person name="Nurse P."/>
        </authorList>
    </citation>
    <scope>NUCLEOTIDE SEQUENCE [LARGE SCALE GENOMIC DNA]</scope>
    <source>
        <strain>972 / ATCC 24843</strain>
    </source>
</reference>
<protein>
    <recommendedName>
        <fullName>Zinc finger protein rsv1</fullName>
    </recommendedName>
    <alternativeName>
        <fullName>Required for stationary phase viability protein 1</fullName>
    </alternativeName>
</protein>
<sequence>MKSYECPFCKRVFHRQEHQVRHIRSHTGEKPFECSYPSCKKRFTRRDELIRHVRTHLRKALVTPEQTLDVNLHKAPDSKPEGDKSTGQEADKSQNQSKDGSITDPVQAAVLALSVAYAKPTSVSLSPTDLQAQSKLIEKPRRRSASNATGSLNKKNQDPLRRFSISESAGAAAPTPSPSNSKSPPSENRKNRLQNVLSPIASNNVPDFNQNYPTESNPMFLSTPRFQNTNGQRTLTVPVSVWDARQPPTSSRSGLPLSVMYNHFPSVPIPPATVNDTSMEYYLPNAYPHPTGISLPFYPFDSGIPVSPNIPVSPSSSFVPMYPTTFPSSKPQIVNAPPAPSYFSPGSSFGAQLCANGSTLLRADTKQYGLALPKITNSNLISPNQTFNPVKSSVKALPTLEPPSSPSHATATSSLHTLFHTAPSRSYD</sequence>
<organism>
    <name type="scientific">Schizosaccharomyces pombe (strain 972 / ATCC 24843)</name>
    <name type="common">Fission yeast</name>
    <dbReference type="NCBI Taxonomy" id="284812"/>
    <lineage>
        <taxon>Eukaryota</taxon>
        <taxon>Fungi</taxon>
        <taxon>Dikarya</taxon>
        <taxon>Ascomycota</taxon>
        <taxon>Taphrinomycotina</taxon>
        <taxon>Schizosaccharomycetes</taxon>
        <taxon>Schizosaccharomycetales</taxon>
        <taxon>Schizosaccharomycetaceae</taxon>
        <taxon>Schizosaccharomyces</taxon>
    </lineage>
</organism>
<comment type="function">
    <text>Involved in maintaining cell viability under glucose starvation conditions. May have a role in regulating genes involved in gluconeogenesis.</text>
</comment>
<comment type="subcellular location">
    <subcellularLocation>
        <location evidence="1">Nucleus</location>
    </subcellularLocation>
</comment>
<comment type="induction">
    <text>By glucose starvation.</text>
</comment>
<comment type="similarity">
    <text evidence="4">Belongs to the creA/MIG C2H2-type zinc-finger protein family.</text>
</comment>
<gene>
    <name type="primary">rsv1</name>
    <name type="ORF">SPBP4H10.09</name>
</gene>
<dbReference type="EMBL" id="AF016222">
    <property type="protein sequence ID" value="AAB87047.1"/>
    <property type="molecule type" value="Genomic_DNA"/>
</dbReference>
<dbReference type="EMBL" id="CU329671">
    <property type="protein sequence ID" value="CAB83167.1"/>
    <property type="molecule type" value="Genomic_DNA"/>
</dbReference>
<dbReference type="PIR" id="T43532">
    <property type="entry name" value="T43532"/>
</dbReference>
<dbReference type="RefSeq" id="NP_596183.1">
    <property type="nucleotide sequence ID" value="NM_001022102.2"/>
</dbReference>
<dbReference type="SMR" id="Q9P7D9"/>
<dbReference type="BioGRID" id="277834">
    <property type="interactions" value="8"/>
</dbReference>
<dbReference type="FunCoup" id="Q9P7D9">
    <property type="interactions" value="201"/>
</dbReference>
<dbReference type="STRING" id="284812.Q9P7D9"/>
<dbReference type="PaxDb" id="4896-SPBP4H10.09.1"/>
<dbReference type="EnsemblFungi" id="SPBP4H10.09.1">
    <property type="protein sequence ID" value="SPBP4H10.09.1:pep"/>
    <property type="gene ID" value="SPBP4H10.09"/>
</dbReference>
<dbReference type="GeneID" id="2541322"/>
<dbReference type="KEGG" id="spo:2541322"/>
<dbReference type="PomBase" id="SPBP4H10.09">
    <property type="gene designation" value="rsv1"/>
</dbReference>
<dbReference type="VEuPathDB" id="FungiDB:SPBP4H10.09"/>
<dbReference type="eggNOG" id="KOG1721">
    <property type="taxonomic scope" value="Eukaryota"/>
</dbReference>
<dbReference type="HOGENOM" id="CLU_679994_0_0_1"/>
<dbReference type="InParanoid" id="Q9P7D9"/>
<dbReference type="OMA" id="SMEYYLP"/>
<dbReference type="PRO" id="PR:Q9P7D9"/>
<dbReference type="Proteomes" id="UP000002485">
    <property type="component" value="Chromosome II"/>
</dbReference>
<dbReference type="GO" id="GO:0005737">
    <property type="term" value="C:cytoplasm"/>
    <property type="evidence" value="ECO:0000318"/>
    <property type="project" value="GO_Central"/>
</dbReference>
<dbReference type="GO" id="GO:0072686">
    <property type="term" value="C:mitotic spindle"/>
    <property type="evidence" value="ECO:0007005"/>
    <property type="project" value="PomBase"/>
</dbReference>
<dbReference type="GO" id="GO:0005634">
    <property type="term" value="C:nucleus"/>
    <property type="evidence" value="ECO:0007005"/>
    <property type="project" value="PomBase"/>
</dbReference>
<dbReference type="GO" id="GO:0000981">
    <property type="term" value="F:DNA-binding transcription factor activity, RNA polymerase II-specific"/>
    <property type="evidence" value="ECO:0000315"/>
    <property type="project" value="PomBase"/>
</dbReference>
<dbReference type="GO" id="GO:0000978">
    <property type="term" value="F:RNA polymerase II cis-regulatory region sequence-specific DNA binding"/>
    <property type="evidence" value="ECO:0000269"/>
    <property type="project" value="PomBase"/>
</dbReference>
<dbReference type="GO" id="GO:0008270">
    <property type="term" value="F:zinc ion binding"/>
    <property type="evidence" value="ECO:0007669"/>
    <property type="project" value="UniProtKB-KW"/>
</dbReference>
<dbReference type="GO" id="GO:0006357">
    <property type="term" value="P:regulation of transcription by RNA polymerase II"/>
    <property type="evidence" value="ECO:0000315"/>
    <property type="project" value="PomBase"/>
</dbReference>
<dbReference type="FunFam" id="3.30.160.60:FF:000125">
    <property type="entry name" value="Putative zinc finger protein 143"/>
    <property type="match status" value="1"/>
</dbReference>
<dbReference type="Gene3D" id="3.30.160.60">
    <property type="entry name" value="Classic Zinc Finger"/>
    <property type="match status" value="2"/>
</dbReference>
<dbReference type="InterPro" id="IPR051007">
    <property type="entry name" value="creA/MIG_C2H2-ZnF"/>
</dbReference>
<dbReference type="InterPro" id="IPR036236">
    <property type="entry name" value="Znf_C2H2_sf"/>
</dbReference>
<dbReference type="InterPro" id="IPR013087">
    <property type="entry name" value="Znf_C2H2_type"/>
</dbReference>
<dbReference type="PANTHER" id="PTHR47428">
    <property type="entry name" value="REGULATORY PROTEIN MIG1-RELATED"/>
    <property type="match status" value="1"/>
</dbReference>
<dbReference type="PANTHER" id="PTHR47428:SF2">
    <property type="entry name" value="ZINC FINGER PROTEIN RSV1"/>
    <property type="match status" value="1"/>
</dbReference>
<dbReference type="Pfam" id="PF00096">
    <property type="entry name" value="zf-C2H2"/>
    <property type="match status" value="2"/>
</dbReference>
<dbReference type="SMART" id="SM00355">
    <property type="entry name" value="ZnF_C2H2"/>
    <property type="match status" value="2"/>
</dbReference>
<dbReference type="SUPFAM" id="SSF57667">
    <property type="entry name" value="beta-beta-alpha zinc fingers"/>
    <property type="match status" value="1"/>
</dbReference>
<dbReference type="PROSITE" id="PS00028">
    <property type="entry name" value="ZINC_FINGER_C2H2_1"/>
    <property type="match status" value="2"/>
</dbReference>
<dbReference type="PROSITE" id="PS50157">
    <property type="entry name" value="ZINC_FINGER_C2H2_2"/>
    <property type="match status" value="2"/>
</dbReference>